<proteinExistence type="inferred from homology"/>
<feature type="chain" id="PRO_1000001972" description="Glutamate--tRNA ligase">
    <location>
        <begin position="1"/>
        <end position="481"/>
    </location>
</feature>
<feature type="short sequence motif" description="'HIGH' region" evidence="1">
    <location>
        <begin position="11"/>
        <end position="21"/>
    </location>
</feature>
<feature type="short sequence motif" description="'KMSKS' region" evidence="1">
    <location>
        <begin position="255"/>
        <end position="259"/>
    </location>
</feature>
<feature type="binding site" evidence="1">
    <location>
        <position position="258"/>
    </location>
    <ligand>
        <name>ATP</name>
        <dbReference type="ChEBI" id="CHEBI:30616"/>
    </ligand>
</feature>
<sequence length="481" mass="55093">MSKPIRVRYAPSPTGLLHIGNARTALFNYLYARRHGGTFIIRIEDTDRKRHVEDGERSQLENLKWLGMDWDESPETHENYRQSERLALYQQYIDQLLAEGKAYKSYVTEEELAAERERQEAAGETPRYINEFIGMSADEKAKYIAEREAAGIVPTVRLAVNESGIYKWTDMVKGDIEFEGGNIGGDWVIQKKDGYPTYNFAVVVDDHDMQISHVIRGDDHIANTPKQLMVYEALGWEAPEFGHMTLIINSETGKKLSKRDTNTLQFIEDYRKKGYMPEAVFNFIALLGWNPGGEEEIFSREQLIALFDENRLSKSPAAFDQKKMDWMSNEYLKHADFETVYALCKPFLEEAGRLTEKAEKLVELYKPQLKSADEIIPLTDLFFSDFPELTEAEKEVMAGETVSTVLQAFKAKLEAMSDEDFKPENIFPQIKAVQKETGIKGKNLFMPIRIAVSGEMHGPELPNTIYLLGRDKSIEHIKNML</sequence>
<dbReference type="EC" id="6.1.1.17" evidence="1"/>
<dbReference type="EMBL" id="CP000260">
    <property type="protein sequence ID" value="ABF33267.1"/>
    <property type="molecule type" value="Genomic_DNA"/>
</dbReference>
<dbReference type="SMR" id="Q1JIQ6"/>
<dbReference type="KEGG" id="sph:MGAS10270_Spy0202"/>
<dbReference type="HOGENOM" id="CLU_015768_6_1_9"/>
<dbReference type="Proteomes" id="UP000002436">
    <property type="component" value="Chromosome"/>
</dbReference>
<dbReference type="GO" id="GO:0005829">
    <property type="term" value="C:cytosol"/>
    <property type="evidence" value="ECO:0007669"/>
    <property type="project" value="TreeGrafter"/>
</dbReference>
<dbReference type="GO" id="GO:0005524">
    <property type="term" value="F:ATP binding"/>
    <property type="evidence" value="ECO:0007669"/>
    <property type="project" value="UniProtKB-UniRule"/>
</dbReference>
<dbReference type="GO" id="GO:0004818">
    <property type="term" value="F:glutamate-tRNA ligase activity"/>
    <property type="evidence" value="ECO:0007669"/>
    <property type="project" value="UniProtKB-UniRule"/>
</dbReference>
<dbReference type="GO" id="GO:0000049">
    <property type="term" value="F:tRNA binding"/>
    <property type="evidence" value="ECO:0007669"/>
    <property type="project" value="InterPro"/>
</dbReference>
<dbReference type="GO" id="GO:0008270">
    <property type="term" value="F:zinc ion binding"/>
    <property type="evidence" value="ECO:0007669"/>
    <property type="project" value="InterPro"/>
</dbReference>
<dbReference type="GO" id="GO:0006424">
    <property type="term" value="P:glutamyl-tRNA aminoacylation"/>
    <property type="evidence" value="ECO:0007669"/>
    <property type="project" value="UniProtKB-UniRule"/>
</dbReference>
<dbReference type="CDD" id="cd00808">
    <property type="entry name" value="GluRS_core"/>
    <property type="match status" value="1"/>
</dbReference>
<dbReference type="FunFam" id="1.10.10.350:FF:000002">
    <property type="entry name" value="Glutamate--tRNA ligase"/>
    <property type="match status" value="1"/>
</dbReference>
<dbReference type="FunFam" id="3.40.50.620:FF:000007">
    <property type="entry name" value="Glutamate--tRNA ligase"/>
    <property type="match status" value="1"/>
</dbReference>
<dbReference type="Gene3D" id="1.10.10.350">
    <property type="match status" value="1"/>
</dbReference>
<dbReference type="Gene3D" id="3.40.50.620">
    <property type="entry name" value="HUPs"/>
    <property type="match status" value="1"/>
</dbReference>
<dbReference type="HAMAP" id="MF_00022">
    <property type="entry name" value="Glu_tRNA_synth_type1"/>
    <property type="match status" value="1"/>
</dbReference>
<dbReference type="InterPro" id="IPR045462">
    <property type="entry name" value="aa-tRNA-synth_I_cd-bd"/>
</dbReference>
<dbReference type="InterPro" id="IPR020751">
    <property type="entry name" value="aa-tRNA-synth_I_codon-bd_sub2"/>
</dbReference>
<dbReference type="InterPro" id="IPR001412">
    <property type="entry name" value="aa-tRNA-synth_I_CS"/>
</dbReference>
<dbReference type="InterPro" id="IPR008925">
    <property type="entry name" value="aa_tRNA-synth_I_cd-bd_sf"/>
</dbReference>
<dbReference type="InterPro" id="IPR004527">
    <property type="entry name" value="Glu-tRNA-ligase_bac/mito"/>
</dbReference>
<dbReference type="InterPro" id="IPR000924">
    <property type="entry name" value="Glu/Gln-tRNA-synth"/>
</dbReference>
<dbReference type="InterPro" id="IPR020058">
    <property type="entry name" value="Glu/Gln-tRNA-synth_Ib_cat-dom"/>
</dbReference>
<dbReference type="InterPro" id="IPR049940">
    <property type="entry name" value="GluQ/Sye"/>
</dbReference>
<dbReference type="InterPro" id="IPR033910">
    <property type="entry name" value="GluRS_core"/>
</dbReference>
<dbReference type="InterPro" id="IPR014729">
    <property type="entry name" value="Rossmann-like_a/b/a_fold"/>
</dbReference>
<dbReference type="NCBIfam" id="TIGR00464">
    <property type="entry name" value="gltX_bact"/>
    <property type="match status" value="1"/>
</dbReference>
<dbReference type="PANTHER" id="PTHR43311">
    <property type="entry name" value="GLUTAMATE--TRNA LIGASE"/>
    <property type="match status" value="1"/>
</dbReference>
<dbReference type="PANTHER" id="PTHR43311:SF2">
    <property type="entry name" value="GLUTAMATE--TRNA LIGASE, MITOCHONDRIAL-RELATED"/>
    <property type="match status" value="1"/>
</dbReference>
<dbReference type="Pfam" id="PF19269">
    <property type="entry name" value="Anticodon_2"/>
    <property type="match status" value="1"/>
</dbReference>
<dbReference type="Pfam" id="PF00749">
    <property type="entry name" value="tRNA-synt_1c"/>
    <property type="match status" value="1"/>
</dbReference>
<dbReference type="PRINTS" id="PR00987">
    <property type="entry name" value="TRNASYNTHGLU"/>
</dbReference>
<dbReference type="SUPFAM" id="SSF48163">
    <property type="entry name" value="An anticodon-binding domain of class I aminoacyl-tRNA synthetases"/>
    <property type="match status" value="1"/>
</dbReference>
<dbReference type="SUPFAM" id="SSF52374">
    <property type="entry name" value="Nucleotidylyl transferase"/>
    <property type="match status" value="1"/>
</dbReference>
<dbReference type="PROSITE" id="PS00178">
    <property type="entry name" value="AA_TRNA_LIGASE_I"/>
    <property type="match status" value="1"/>
</dbReference>
<name>SYE_STRPD</name>
<organism>
    <name type="scientific">Streptococcus pyogenes serotype M2 (strain MGAS10270)</name>
    <dbReference type="NCBI Taxonomy" id="370552"/>
    <lineage>
        <taxon>Bacteria</taxon>
        <taxon>Bacillati</taxon>
        <taxon>Bacillota</taxon>
        <taxon>Bacilli</taxon>
        <taxon>Lactobacillales</taxon>
        <taxon>Streptococcaceae</taxon>
        <taxon>Streptococcus</taxon>
    </lineage>
</organism>
<protein>
    <recommendedName>
        <fullName evidence="1">Glutamate--tRNA ligase</fullName>
        <ecNumber evidence="1">6.1.1.17</ecNumber>
    </recommendedName>
    <alternativeName>
        <fullName evidence="1">Glutamyl-tRNA synthetase</fullName>
        <shortName evidence="1">GluRS</shortName>
    </alternativeName>
</protein>
<evidence type="ECO:0000255" key="1">
    <source>
        <dbReference type="HAMAP-Rule" id="MF_00022"/>
    </source>
</evidence>
<keyword id="KW-0030">Aminoacyl-tRNA synthetase</keyword>
<keyword id="KW-0067">ATP-binding</keyword>
<keyword id="KW-0963">Cytoplasm</keyword>
<keyword id="KW-0436">Ligase</keyword>
<keyword id="KW-0547">Nucleotide-binding</keyword>
<keyword id="KW-0648">Protein biosynthesis</keyword>
<accession>Q1JIQ6</accession>
<reference key="1">
    <citation type="journal article" date="2006" name="Proc. Natl. Acad. Sci. U.S.A.">
        <title>Molecular genetic anatomy of inter- and intraserotype variation in the human bacterial pathogen group A Streptococcus.</title>
        <authorList>
            <person name="Beres S.B."/>
            <person name="Richter E.W."/>
            <person name="Nagiec M.J."/>
            <person name="Sumby P."/>
            <person name="Porcella S.F."/>
            <person name="DeLeo F.R."/>
            <person name="Musser J.M."/>
        </authorList>
    </citation>
    <scope>NUCLEOTIDE SEQUENCE [LARGE SCALE GENOMIC DNA]</scope>
    <source>
        <strain>MGAS10270</strain>
    </source>
</reference>
<comment type="function">
    <text evidence="1">Catalyzes the attachment of glutamate to tRNA(Glu) in a two-step reaction: glutamate is first activated by ATP to form Glu-AMP and then transferred to the acceptor end of tRNA(Glu).</text>
</comment>
<comment type="catalytic activity">
    <reaction evidence="1">
        <text>tRNA(Glu) + L-glutamate + ATP = L-glutamyl-tRNA(Glu) + AMP + diphosphate</text>
        <dbReference type="Rhea" id="RHEA:23540"/>
        <dbReference type="Rhea" id="RHEA-COMP:9663"/>
        <dbReference type="Rhea" id="RHEA-COMP:9680"/>
        <dbReference type="ChEBI" id="CHEBI:29985"/>
        <dbReference type="ChEBI" id="CHEBI:30616"/>
        <dbReference type="ChEBI" id="CHEBI:33019"/>
        <dbReference type="ChEBI" id="CHEBI:78442"/>
        <dbReference type="ChEBI" id="CHEBI:78520"/>
        <dbReference type="ChEBI" id="CHEBI:456215"/>
        <dbReference type="EC" id="6.1.1.17"/>
    </reaction>
</comment>
<comment type="subunit">
    <text evidence="1">Monomer.</text>
</comment>
<comment type="subcellular location">
    <subcellularLocation>
        <location evidence="1">Cytoplasm</location>
    </subcellularLocation>
</comment>
<comment type="similarity">
    <text evidence="1">Belongs to the class-I aminoacyl-tRNA synthetase family. Glutamate--tRNA ligase type 1 subfamily.</text>
</comment>
<gene>
    <name evidence="1" type="primary">gltX</name>
    <name type="ordered locus">MGAS10270_Spy0202</name>
</gene>